<evidence type="ECO:0000255" key="1"/>
<evidence type="ECO:0000305" key="2"/>
<gene>
    <name type="ordered locus">RP098</name>
</gene>
<protein>
    <recommendedName>
        <fullName>Uncharacterized protein RP098</fullName>
    </recommendedName>
</protein>
<sequence length="83" mass="9266">MFKHVLLSIIIFLGINQNVYSINSNSYKTDDIIKIVIILGIVILIFSPAKFRIIVIGTILGLACAYFTYKYIIPIFIASLNAA</sequence>
<reference key="1">
    <citation type="journal article" date="1998" name="Nature">
        <title>The genome sequence of Rickettsia prowazekii and the origin of mitochondria.</title>
        <authorList>
            <person name="Andersson S.G.E."/>
            <person name="Zomorodipour A."/>
            <person name="Andersson J.O."/>
            <person name="Sicheritz-Ponten T."/>
            <person name="Alsmark U.C.M."/>
            <person name="Podowski R.M."/>
            <person name="Naeslund A.K."/>
            <person name="Eriksson A.-S."/>
            <person name="Winkler H.H."/>
            <person name="Kurland C.G."/>
        </authorList>
    </citation>
    <scope>NUCLEOTIDE SEQUENCE [LARGE SCALE GENOMIC DNA]</scope>
    <source>
        <strain>Madrid E</strain>
    </source>
</reference>
<accession>Q9ZE49</accession>
<dbReference type="EMBL" id="AJ235270">
    <property type="protein sequence ID" value="CAA14568.1"/>
    <property type="molecule type" value="Genomic_DNA"/>
</dbReference>
<dbReference type="PIR" id="A71719">
    <property type="entry name" value="A71719"/>
</dbReference>
<dbReference type="RefSeq" id="NP_220491.1">
    <property type="nucleotide sequence ID" value="NC_000963.1"/>
</dbReference>
<dbReference type="RefSeq" id="WP_004596477.1">
    <property type="nucleotide sequence ID" value="NC_000963.1"/>
</dbReference>
<dbReference type="STRING" id="272947.gene:17555181"/>
<dbReference type="EnsemblBacteria" id="CAA14568">
    <property type="protein sequence ID" value="CAA14568"/>
    <property type="gene ID" value="CAA14568"/>
</dbReference>
<dbReference type="KEGG" id="rpr:RP098"/>
<dbReference type="PATRIC" id="fig|272947.5.peg.98"/>
<dbReference type="HOGENOM" id="CLU_2556098_0_0_5"/>
<dbReference type="OrthoDB" id="7161115at2"/>
<dbReference type="Proteomes" id="UP000002480">
    <property type="component" value="Chromosome"/>
</dbReference>
<dbReference type="GO" id="GO:0005886">
    <property type="term" value="C:plasma membrane"/>
    <property type="evidence" value="ECO:0007669"/>
    <property type="project" value="UniProtKB-SubCell"/>
</dbReference>
<dbReference type="InterPro" id="IPR035116">
    <property type="entry name" value="DUF5510"/>
</dbReference>
<dbReference type="Pfam" id="PF17629">
    <property type="entry name" value="DUF5510"/>
    <property type="match status" value="1"/>
</dbReference>
<feature type="chain" id="PRO_0000101316" description="Uncharacterized protein RP098">
    <location>
        <begin position="1"/>
        <end position="83"/>
    </location>
</feature>
<feature type="transmembrane region" description="Helical" evidence="1">
    <location>
        <begin position="5"/>
        <end position="22"/>
    </location>
</feature>
<feature type="transmembrane region" description="Helical" evidence="1">
    <location>
        <begin position="32"/>
        <end position="49"/>
    </location>
</feature>
<feature type="transmembrane region" description="Helical" evidence="1">
    <location>
        <begin position="56"/>
        <end position="78"/>
    </location>
</feature>
<proteinExistence type="predicted"/>
<comment type="subcellular location">
    <subcellularLocation>
        <location evidence="2">Cell membrane</location>
        <topology evidence="2">Multi-pass membrane protein</topology>
    </subcellularLocation>
</comment>
<organism>
    <name type="scientific">Rickettsia prowazekii (strain Madrid E)</name>
    <dbReference type="NCBI Taxonomy" id="272947"/>
    <lineage>
        <taxon>Bacteria</taxon>
        <taxon>Pseudomonadati</taxon>
        <taxon>Pseudomonadota</taxon>
        <taxon>Alphaproteobacteria</taxon>
        <taxon>Rickettsiales</taxon>
        <taxon>Rickettsiaceae</taxon>
        <taxon>Rickettsieae</taxon>
        <taxon>Rickettsia</taxon>
        <taxon>typhus group</taxon>
    </lineage>
</organism>
<keyword id="KW-1003">Cell membrane</keyword>
<keyword id="KW-0472">Membrane</keyword>
<keyword id="KW-1185">Reference proteome</keyword>
<keyword id="KW-0812">Transmembrane</keyword>
<keyword id="KW-1133">Transmembrane helix</keyword>
<name>Y098_RICPR</name>